<keyword id="KW-0066">ATP synthesis</keyword>
<keyword id="KW-0067">ATP-binding</keyword>
<keyword id="KW-0997">Cell inner membrane</keyword>
<keyword id="KW-1003">Cell membrane</keyword>
<keyword id="KW-0139">CF(1)</keyword>
<keyword id="KW-0375">Hydrogen ion transport</keyword>
<keyword id="KW-0406">Ion transport</keyword>
<keyword id="KW-0472">Membrane</keyword>
<keyword id="KW-0547">Nucleotide-binding</keyword>
<keyword id="KW-1185">Reference proteome</keyword>
<keyword id="KW-1278">Translocase</keyword>
<keyword id="KW-0813">Transport</keyword>
<proteinExistence type="inferred from homology"/>
<reference key="1">
    <citation type="journal article" date="2005" name="Nucleic Acids Res.">
        <title>Genome dynamics and diversity of Shigella species, the etiologic agents of bacillary dysentery.</title>
        <authorList>
            <person name="Yang F."/>
            <person name="Yang J."/>
            <person name="Zhang X."/>
            <person name="Chen L."/>
            <person name="Jiang Y."/>
            <person name="Yan Y."/>
            <person name="Tang X."/>
            <person name="Wang J."/>
            <person name="Xiong Z."/>
            <person name="Dong J."/>
            <person name="Xue Y."/>
            <person name="Zhu Y."/>
            <person name="Xu X."/>
            <person name="Sun L."/>
            <person name="Chen S."/>
            <person name="Nie H."/>
            <person name="Peng J."/>
            <person name="Xu J."/>
            <person name="Wang Y."/>
            <person name="Yuan Z."/>
            <person name="Wen Y."/>
            <person name="Yao Z."/>
            <person name="Shen Y."/>
            <person name="Qiang B."/>
            <person name="Hou Y."/>
            <person name="Yu J."/>
            <person name="Jin Q."/>
        </authorList>
    </citation>
    <scope>NUCLEOTIDE SEQUENCE [LARGE SCALE GENOMIC DNA]</scope>
    <source>
        <strain>Sd197</strain>
    </source>
</reference>
<gene>
    <name evidence="1" type="primary">atpA</name>
    <name type="ordered locus">SDY_4014</name>
</gene>
<evidence type="ECO:0000255" key="1">
    <source>
        <dbReference type="HAMAP-Rule" id="MF_01346"/>
    </source>
</evidence>
<sequence length="513" mass="55222">MQLNSTEISELIKQRIAQFNVVSEAHNEGTIVSVSDGVIRIHGLADCMQGEMISLPGNRYAIALNLERDSVGAVVMGPYADLAEGMKVKCTGRILEVPVGRGLLGRVVNTLGAPIDGKGPLDHDGFSAVEAIAPGVIERQSVDQPVQTGYKAVDSMIPIGRGQRELIIGDRQTGKTALAIDAIINQRDSGIKCIYVAIGQKASTISNVVRKLEEHGALANTIVVVATASESAALQYLAPYAGCAMGEYFRDRGEDALIIYDDLSKQAVAYRQISLLLRRPPGREAFPGDVFYLHSRLLERAARVNAEYVEAFTKGEVKGKTGSLTALPIIETQAGDVSAFVPTNVISITDGQIFLETNLFNAGIRPAVNPGISVSRVGGAAQTKIMKKLSGGIRTALAQYRELAAFSQFASDLDDATRKQLDHGQKVTELLKQKQYAPMSVAQQSLVLFAAERGYLADVELSKIGSFEAALLAYVDRDHAPLMQEINQTGGYNDEIEGKLKGILDSFKATQSW</sequence>
<name>ATPA_SHIDS</name>
<organism>
    <name type="scientific">Shigella dysenteriae serotype 1 (strain Sd197)</name>
    <dbReference type="NCBI Taxonomy" id="300267"/>
    <lineage>
        <taxon>Bacteria</taxon>
        <taxon>Pseudomonadati</taxon>
        <taxon>Pseudomonadota</taxon>
        <taxon>Gammaproteobacteria</taxon>
        <taxon>Enterobacterales</taxon>
        <taxon>Enterobacteriaceae</taxon>
        <taxon>Shigella</taxon>
    </lineage>
</organism>
<feature type="chain" id="PRO_0000238353" description="ATP synthase subunit alpha">
    <location>
        <begin position="1"/>
        <end position="513"/>
    </location>
</feature>
<feature type="binding site" evidence="1">
    <location>
        <begin position="169"/>
        <end position="176"/>
    </location>
    <ligand>
        <name>ATP</name>
        <dbReference type="ChEBI" id="CHEBI:30616"/>
    </ligand>
</feature>
<feature type="site" description="Required for activity" evidence="1">
    <location>
        <position position="373"/>
    </location>
</feature>
<protein>
    <recommendedName>
        <fullName evidence="1">ATP synthase subunit alpha</fullName>
        <ecNumber evidence="1">7.1.2.2</ecNumber>
    </recommendedName>
    <alternativeName>
        <fullName evidence="1">ATP synthase F1 sector subunit alpha</fullName>
    </alternativeName>
    <alternativeName>
        <fullName evidence="1">F-ATPase subunit alpha</fullName>
    </alternativeName>
</protein>
<comment type="function">
    <text evidence="1">Produces ATP from ADP in the presence of a proton gradient across the membrane. The alpha chain is a regulatory subunit.</text>
</comment>
<comment type="catalytic activity">
    <reaction evidence="1">
        <text>ATP + H2O + 4 H(+)(in) = ADP + phosphate + 5 H(+)(out)</text>
        <dbReference type="Rhea" id="RHEA:57720"/>
        <dbReference type="ChEBI" id="CHEBI:15377"/>
        <dbReference type="ChEBI" id="CHEBI:15378"/>
        <dbReference type="ChEBI" id="CHEBI:30616"/>
        <dbReference type="ChEBI" id="CHEBI:43474"/>
        <dbReference type="ChEBI" id="CHEBI:456216"/>
        <dbReference type="EC" id="7.1.2.2"/>
    </reaction>
</comment>
<comment type="subunit">
    <text evidence="1">F-type ATPases have 2 components, CF(1) - the catalytic core - and CF(0) - the membrane proton channel. CF(1) has five subunits: alpha(3), beta(3), gamma(1), delta(1), epsilon(1). CF(0) has three main subunits: a(1), b(2) and c(9-12). The alpha and beta chains form an alternating ring which encloses part of the gamma chain. CF(1) is attached to CF(0) by a central stalk formed by the gamma and epsilon chains, while a peripheral stalk is formed by the delta and b chains.</text>
</comment>
<comment type="subcellular location">
    <subcellularLocation>
        <location evidence="1">Cell inner membrane</location>
        <topology evidence="1">Peripheral membrane protein</topology>
    </subcellularLocation>
</comment>
<comment type="similarity">
    <text evidence="1">Belongs to the ATPase alpha/beta chains family.</text>
</comment>
<dbReference type="EC" id="7.1.2.2" evidence="1"/>
<dbReference type="EMBL" id="CP000034">
    <property type="protein sequence ID" value="ABB63932.1"/>
    <property type="molecule type" value="Genomic_DNA"/>
</dbReference>
<dbReference type="RefSeq" id="WP_001176745.1">
    <property type="nucleotide sequence ID" value="NC_007606.1"/>
</dbReference>
<dbReference type="RefSeq" id="YP_405423.1">
    <property type="nucleotide sequence ID" value="NC_007606.1"/>
</dbReference>
<dbReference type="SMR" id="Q329S3"/>
<dbReference type="STRING" id="300267.SDY_4014"/>
<dbReference type="EnsemblBacteria" id="ABB63932">
    <property type="protein sequence ID" value="ABB63932"/>
    <property type="gene ID" value="SDY_4014"/>
</dbReference>
<dbReference type="GeneID" id="93778233"/>
<dbReference type="KEGG" id="sdy:SDY_4014"/>
<dbReference type="PATRIC" id="fig|300267.13.peg.4727"/>
<dbReference type="HOGENOM" id="CLU_010091_2_1_6"/>
<dbReference type="Proteomes" id="UP000002716">
    <property type="component" value="Chromosome"/>
</dbReference>
<dbReference type="GO" id="GO:0005886">
    <property type="term" value="C:plasma membrane"/>
    <property type="evidence" value="ECO:0007669"/>
    <property type="project" value="UniProtKB-SubCell"/>
</dbReference>
<dbReference type="GO" id="GO:0045259">
    <property type="term" value="C:proton-transporting ATP synthase complex"/>
    <property type="evidence" value="ECO:0007669"/>
    <property type="project" value="UniProtKB-KW"/>
</dbReference>
<dbReference type="GO" id="GO:0043531">
    <property type="term" value="F:ADP binding"/>
    <property type="evidence" value="ECO:0007669"/>
    <property type="project" value="TreeGrafter"/>
</dbReference>
<dbReference type="GO" id="GO:0005524">
    <property type="term" value="F:ATP binding"/>
    <property type="evidence" value="ECO:0007669"/>
    <property type="project" value="UniProtKB-UniRule"/>
</dbReference>
<dbReference type="GO" id="GO:0046933">
    <property type="term" value="F:proton-transporting ATP synthase activity, rotational mechanism"/>
    <property type="evidence" value="ECO:0007669"/>
    <property type="project" value="UniProtKB-UniRule"/>
</dbReference>
<dbReference type="CDD" id="cd18113">
    <property type="entry name" value="ATP-synt_F1_alpha_C"/>
    <property type="match status" value="1"/>
</dbReference>
<dbReference type="CDD" id="cd18116">
    <property type="entry name" value="ATP-synt_F1_alpha_N"/>
    <property type="match status" value="1"/>
</dbReference>
<dbReference type="CDD" id="cd01132">
    <property type="entry name" value="F1-ATPase_alpha_CD"/>
    <property type="match status" value="1"/>
</dbReference>
<dbReference type="FunFam" id="1.20.150.20:FF:000001">
    <property type="entry name" value="ATP synthase subunit alpha"/>
    <property type="match status" value="1"/>
</dbReference>
<dbReference type="FunFam" id="2.40.30.20:FF:000001">
    <property type="entry name" value="ATP synthase subunit alpha"/>
    <property type="match status" value="1"/>
</dbReference>
<dbReference type="FunFam" id="3.40.50.300:FF:000002">
    <property type="entry name" value="ATP synthase subunit alpha"/>
    <property type="match status" value="1"/>
</dbReference>
<dbReference type="Gene3D" id="2.40.30.20">
    <property type="match status" value="1"/>
</dbReference>
<dbReference type="Gene3D" id="1.20.150.20">
    <property type="entry name" value="ATP synthase alpha/beta chain, C-terminal domain"/>
    <property type="match status" value="1"/>
</dbReference>
<dbReference type="Gene3D" id="3.40.50.300">
    <property type="entry name" value="P-loop containing nucleotide triphosphate hydrolases"/>
    <property type="match status" value="1"/>
</dbReference>
<dbReference type="HAMAP" id="MF_01346">
    <property type="entry name" value="ATP_synth_alpha_bact"/>
    <property type="match status" value="1"/>
</dbReference>
<dbReference type="InterPro" id="IPR023366">
    <property type="entry name" value="ATP_synth_asu-like_sf"/>
</dbReference>
<dbReference type="InterPro" id="IPR000793">
    <property type="entry name" value="ATP_synth_asu_C"/>
</dbReference>
<dbReference type="InterPro" id="IPR038376">
    <property type="entry name" value="ATP_synth_asu_C_sf"/>
</dbReference>
<dbReference type="InterPro" id="IPR033732">
    <property type="entry name" value="ATP_synth_F1_a_nt-bd_dom"/>
</dbReference>
<dbReference type="InterPro" id="IPR005294">
    <property type="entry name" value="ATP_synth_F1_asu"/>
</dbReference>
<dbReference type="InterPro" id="IPR020003">
    <property type="entry name" value="ATPase_a/bsu_AS"/>
</dbReference>
<dbReference type="InterPro" id="IPR004100">
    <property type="entry name" value="ATPase_F1/V1/A1_a/bsu_N"/>
</dbReference>
<dbReference type="InterPro" id="IPR036121">
    <property type="entry name" value="ATPase_F1/V1/A1_a/bsu_N_sf"/>
</dbReference>
<dbReference type="InterPro" id="IPR000194">
    <property type="entry name" value="ATPase_F1/V1/A1_a/bsu_nucl-bd"/>
</dbReference>
<dbReference type="InterPro" id="IPR027417">
    <property type="entry name" value="P-loop_NTPase"/>
</dbReference>
<dbReference type="NCBIfam" id="TIGR00962">
    <property type="entry name" value="atpA"/>
    <property type="match status" value="1"/>
</dbReference>
<dbReference type="NCBIfam" id="NF009884">
    <property type="entry name" value="PRK13343.1"/>
    <property type="match status" value="1"/>
</dbReference>
<dbReference type="PANTHER" id="PTHR48082">
    <property type="entry name" value="ATP SYNTHASE SUBUNIT ALPHA, MITOCHONDRIAL"/>
    <property type="match status" value="1"/>
</dbReference>
<dbReference type="PANTHER" id="PTHR48082:SF2">
    <property type="entry name" value="ATP SYNTHASE SUBUNIT ALPHA, MITOCHONDRIAL"/>
    <property type="match status" value="1"/>
</dbReference>
<dbReference type="Pfam" id="PF00006">
    <property type="entry name" value="ATP-synt_ab"/>
    <property type="match status" value="1"/>
</dbReference>
<dbReference type="Pfam" id="PF00306">
    <property type="entry name" value="ATP-synt_ab_C"/>
    <property type="match status" value="1"/>
</dbReference>
<dbReference type="Pfam" id="PF02874">
    <property type="entry name" value="ATP-synt_ab_N"/>
    <property type="match status" value="1"/>
</dbReference>
<dbReference type="SUPFAM" id="SSF47917">
    <property type="entry name" value="C-terminal domain of alpha and beta subunits of F1 ATP synthase"/>
    <property type="match status" value="1"/>
</dbReference>
<dbReference type="SUPFAM" id="SSF50615">
    <property type="entry name" value="N-terminal domain of alpha and beta subunits of F1 ATP synthase"/>
    <property type="match status" value="1"/>
</dbReference>
<dbReference type="SUPFAM" id="SSF52540">
    <property type="entry name" value="P-loop containing nucleoside triphosphate hydrolases"/>
    <property type="match status" value="1"/>
</dbReference>
<dbReference type="PROSITE" id="PS00152">
    <property type="entry name" value="ATPASE_ALPHA_BETA"/>
    <property type="match status" value="1"/>
</dbReference>
<accession>Q329S3</accession>